<evidence type="ECO:0000255" key="1">
    <source>
        <dbReference type="HAMAP-Rule" id="MF_00497"/>
    </source>
</evidence>
<gene>
    <name evidence="1" type="primary">egsA</name>
    <name type="synonym">gldA</name>
    <name type="ordered locus">SSO0760</name>
</gene>
<feature type="chain" id="PRO_0000157353" description="Glycerol-1-phosphate dehydrogenase [NAD(P)+]">
    <location>
        <begin position="1"/>
        <end position="351"/>
    </location>
</feature>
<feature type="binding site" evidence="1">
    <location>
        <begin position="97"/>
        <end position="101"/>
    </location>
    <ligand>
        <name>NAD(+)</name>
        <dbReference type="ChEBI" id="CHEBI:57540"/>
    </ligand>
</feature>
<feature type="binding site" evidence="1">
    <location>
        <begin position="119"/>
        <end position="122"/>
    </location>
    <ligand>
        <name>NAD(+)</name>
        <dbReference type="ChEBI" id="CHEBI:57540"/>
    </ligand>
</feature>
<feature type="binding site" evidence="1">
    <location>
        <position position="124"/>
    </location>
    <ligand>
        <name>substrate</name>
    </ligand>
</feature>
<feature type="binding site" evidence="1">
    <location>
        <position position="128"/>
    </location>
    <ligand>
        <name>NAD(+)</name>
        <dbReference type="ChEBI" id="CHEBI:57540"/>
    </ligand>
</feature>
<feature type="binding site" evidence="1">
    <location>
        <position position="171"/>
    </location>
    <ligand>
        <name>substrate</name>
    </ligand>
</feature>
<feature type="binding site" evidence="1">
    <location>
        <position position="171"/>
    </location>
    <ligand>
        <name>Zn(2+)</name>
        <dbReference type="ChEBI" id="CHEBI:29105"/>
        <note>catalytic</note>
    </ligand>
</feature>
<feature type="binding site" evidence="1">
    <location>
        <position position="251"/>
    </location>
    <ligand>
        <name>Zn(2+)</name>
        <dbReference type="ChEBI" id="CHEBI:29105"/>
        <note>catalytic</note>
    </ligand>
</feature>
<feature type="binding site" evidence="1">
    <location>
        <position position="255"/>
    </location>
    <ligand>
        <name>substrate</name>
    </ligand>
</feature>
<feature type="binding site" evidence="1">
    <location>
        <position position="267"/>
    </location>
    <ligand>
        <name>Zn(2+)</name>
        <dbReference type="ChEBI" id="CHEBI:29105"/>
        <note>catalytic</note>
    </ligand>
</feature>
<keyword id="KW-0963">Cytoplasm</keyword>
<keyword id="KW-0444">Lipid biosynthesis</keyword>
<keyword id="KW-0443">Lipid metabolism</keyword>
<keyword id="KW-0479">Metal-binding</keyword>
<keyword id="KW-0520">NAD</keyword>
<keyword id="KW-0521">NADP</keyword>
<keyword id="KW-0560">Oxidoreductase</keyword>
<keyword id="KW-0594">Phospholipid biosynthesis</keyword>
<keyword id="KW-1208">Phospholipid metabolism</keyword>
<keyword id="KW-1185">Reference proteome</keyword>
<keyword id="KW-0862">Zinc</keyword>
<protein>
    <recommendedName>
        <fullName evidence="1">Glycerol-1-phosphate dehydrogenase [NAD(P)+]</fullName>
        <shortName evidence="1">G1P dehydrogenase</shortName>
        <shortName evidence="1">G1PDH</shortName>
        <ecNumber evidence="1">1.1.1.261</ecNumber>
    </recommendedName>
    <alternativeName>
        <fullName evidence="1">Enantiomeric glycerophosphate synthase</fullName>
    </alternativeName>
    <alternativeName>
        <fullName evidence="1">sn-glycerol-1-phosphate dehydrogenase</fullName>
    </alternativeName>
</protein>
<reference key="1">
    <citation type="journal article" date="2000" name="Genome">
        <title>Gene content and organization of a 281-kbp contig from the genome of the extremely thermophilic archaeon, Sulfolobus solfataricus P2.</title>
        <authorList>
            <person name="Charlebois R.L."/>
            <person name="Singh R.K."/>
            <person name="Chan-Weiher C.C.-Y."/>
            <person name="Allard G."/>
            <person name="Chow C."/>
            <person name="Confalonieri F."/>
            <person name="Curtis B."/>
            <person name="Duguet M."/>
            <person name="Erauso G."/>
            <person name="Faguy D."/>
            <person name="Gaasterland T."/>
            <person name="Garrett R.A."/>
            <person name="Gordon P."/>
            <person name="Jeffries A.C."/>
            <person name="Kozera C."/>
            <person name="Kushwaha N."/>
            <person name="Lafleur E."/>
            <person name="Medina N."/>
            <person name="Peng X."/>
            <person name="Penny S.L."/>
            <person name="She Q."/>
            <person name="St Jean A."/>
            <person name="van der Oost J."/>
            <person name="Young F."/>
            <person name="Zivanovic Y."/>
            <person name="Doolittle W.F."/>
            <person name="Ragan M.A."/>
            <person name="Sensen C.W."/>
        </authorList>
    </citation>
    <scope>NUCLEOTIDE SEQUENCE [LARGE SCALE GENOMIC DNA]</scope>
    <source>
        <strain>ATCC 35092 / DSM 1617 / JCM 11322 / P2</strain>
    </source>
</reference>
<reference key="2">
    <citation type="journal article" date="2001" name="Proc. Natl. Acad. Sci. U.S.A.">
        <title>The complete genome of the crenarchaeon Sulfolobus solfataricus P2.</title>
        <authorList>
            <person name="She Q."/>
            <person name="Singh R.K."/>
            <person name="Confalonieri F."/>
            <person name="Zivanovic Y."/>
            <person name="Allard G."/>
            <person name="Awayez M.J."/>
            <person name="Chan-Weiher C.C.-Y."/>
            <person name="Clausen I.G."/>
            <person name="Curtis B.A."/>
            <person name="De Moors A."/>
            <person name="Erauso G."/>
            <person name="Fletcher C."/>
            <person name="Gordon P.M.K."/>
            <person name="Heikamp-de Jong I."/>
            <person name="Jeffries A.C."/>
            <person name="Kozera C.J."/>
            <person name="Medina N."/>
            <person name="Peng X."/>
            <person name="Thi-Ngoc H.P."/>
            <person name="Redder P."/>
            <person name="Schenk M.E."/>
            <person name="Theriault C."/>
            <person name="Tolstrup N."/>
            <person name="Charlebois R.L."/>
            <person name="Doolittle W.F."/>
            <person name="Duguet M."/>
            <person name="Gaasterland T."/>
            <person name="Garrett R.A."/>
            <person name="Ragan M.A."/>
            <person name="Sensen C.W."/>
            <person name="Van der Oost J."/>
        </authorList>
    </citation>
    <scope>NUCLEOTIDE SEQUENCE [LARGE SCALE GENOMIC DNA]</scope>
    <source>
        <strain>ATCC 35092 / DSM 1617 / JCM 11322 / P2</strain>
    </source>
</reference>
<accession>Q9UXE7</accession>
<organism>
    <name type="scientific">Saccharolobus solfataricus (strain ATCC 35092 / DSM 1617 / JCM 11322 / P2)</name>
    <name type="common">Sulfolobus solfataricus</name>
    <dbReference type="NCBI Taxonomy" id="273057"/>
    <lineage>
        <taxon>Archaea</taxon>
        <taxon>Thermoproteota</taxon>
        <taxon>Thermoprotei</taxon>
        <taxon>Sulfolobales</taxon>
        <taxon>Sulfolobaceae</taxon>
        <taxon>Saccharolobus</taxon>
    </lineage>
</organism>
<name>G1PDH_SACS2</name>
<sequence>MNVKEHVISLPRRVFVGHDIVYDISIYFSQLGVTPPFLIVTGTKYTKKIADKVIENLPKDAKYEVVEIDSATLDDVYMVEEVIKRISPSLLLGIGGGKVIDVTKYAAFRNSLEFVSIPTSPSHDGITSPFASIKGLQKPVSVKAKEPLAIIADIEILSLSPRRLINAGIGDTIGKIIAVRDWKLAAKLRGEYYGDYTASLALMSAKHAFQCTKIINKDIKYGVRMLMEALISSGVAMGMAGSTRPASGSEHLFAHAVELIHPEGILHGELVGLGTIIMAYLHGINWKIIRNRLKKIGFPVKAKDLGLSDEEVIKALTIAHTIRPERYTILGDRGLTWSSAEKIARVTKIID</sequence>
<proteinExistence type="inferred from homology"/>
<comment type="function">
    <text evidence="1">Catalyzes the NAD(P)H-dependent reduction of dihydroxyacetonephosphate (DHAP or glycerone phosphate) to glycerol 1-phosphate (G1P). The G1P thus generated is used as the glycerophosphate backbone of phospholipids in the cellular membranes of Archaea.</text>
</comment>
<comment type="catalytic activity">
    <reaction evidence="1">
        <text>sn-glycerol 1-phosphate + NAD(+) = dihydroxyacetone phosphate + NADH + H(+)</text>
        <dbReference type="Rhea" id="RHEA:21412"/>
        <dbReference type="ChEBI" id="CHEBI:15378"/>
        <dbReference type="ChEBI" id="CHEBI:57540"/>
        <dbReference type="ChEBI" id="CHEBI:57642"/>
        <dbReference type="ChEBI" id="CHEBI:57685"/>
        <dbReference type="ChEBI" id="CHEBI:57945"/>
        <dbReference type="EC" id="1.1.1.261"/>
    </reaction>
</comment>
<comment type="catalytic activity">
    <reaction evidence="1">
        <text>sn-glycerol 1-phosphate + NADP(+) = dihydroxyacetone phosphate + NADPH + H(+)</text>
        <dbReference type="Rhea" id="RHEA:21416"/>
        <dbReference type="ChEBI" id="CHEBI:15378"/>
        <dbReference type="ChEBI" id="CHEBI:57642"/>
        <dbReference type="ChEBI" id="CHEBI:57685"/>
        <dbReference type="ChEBI" id="CHEBI:57783"/>
        <dbReference type="ChEBI" id="CHEBI:58349"/>
        <dbReference type="EC" id="1.1.1.261"/>
    </reaction>
</comment>
<comment type="cofactor">
    <cofactor evidence="1">
        <name>Zn(2+)</name>
        <dbReference type="ChEBI" id="CHEBI:29105"/>
    </cofactor>
    <text evidence="1">Binds 1 zinc ion per subunit.</text>
</comment>
<comment type="pathway">
    <text evidence="1">Membrane lipid metabolism; glycerophospholipid metabolism.</text>
</comment>
<comment type="subunit">
    <text evidence="1">Homodimer.</text>
</comment>
<comment type="subcellular location">
    <subcellularLocation>
        <location evidence="1">Cytoplasm</location>
    </subcellularLocation>
</comment>
<comment type="similarity">
    <text evidence="1">Belongs to the glycerol-1-phosphate dehydrogenase family.</text>
</comment>
<dbReference type="EC" id="1.1.1.261" evidence="1"/>
<dbReference type="EMBL" id="Y18930">
    <property type="protein sequence ID" value="CAB57543.1"/>
    <property type="molecule type" value="Genomic_DNA"/>
</dbReference>
<dbReference type="EMBL" id="AE006641">
    <property type="protein sequence ID" value="AAK41055.1"/>
    <property type="molecule type" value="Genomic_DNA"/>
</dbReference>
<dbReference type="PIR" id="H90224">
    <property type="entry name" value="H90224"/>
</dbReference>
<dbReference type="RefSeq" id="WP_009991342.1">
    <property type="nucleotide sequence ID" value="NC_002754.1"/>
</dbReference>
<dbReference type="SMR" id="Q9UXE7"/>
<dbReference type="FunCoup" id="Q9UXE7">
    <property type="interactions" value="1"/>
</dbReference>
<dbReference type="STRING" id="273057.SSO0760"/>
<dbReference type="PaxDb" id="273057-SSO0760"/>
<dbReference type="EnsemblBacteria" id="AAK41055">
    <property type="protein sequence ID" value="AAK41055"/>
    <property type="gene ID" value="SSO0760"/>
</dbReference>
<dbReference type="KEGG" id="sso:SSO0760"/>
<dbReference type="PATRIC" id="fig|273057.12.peg.757"/>
<dbReference type="eggNOG" id="arCOG00982">
    <property type="taxonomic scope" value="Archaea"/>
</dbReference>
<dbReference type="HOGENOM" id="CLU_038362_0_0_2"/>
<dbReference type="InParanoid" id="Q9UXE7"/>
<dbReference type="PhylomeDB" id="Q9UXE7"/>
<dbReference type="UniPathway" id="UPA00940"/>
<dbReference type="Proteomes" id="UP000001974">
    <property type="component" value="Chromosome"/>
</dbReference>
<dbReference type="GO" id="GO:0005737">
    <property type="term" value="C:cytoplasm"/>
    <property type="evidence" value="ECO:0007669"/>
    <property type="project" value="UniProtKB-SubCell"/>
</dbReference>
<dbReference type="GO" id="GO:0106357">
    <property type="term" value="F:glycerol-1-phosphate dehydrogenase (NAD+) activity"/>
    <property type="evidence" value="ECO:0007669"/>
    <property type="project" value="RHEA"/>
</dbReference>
<dbReference type="GO" id="GO:0106358">
    <property type="term" value="F:glycerol-1-phosphate dehydrogenase (NADP+) activity"/>
    <property type="evidence" value="ECO:0007669"/>
    <property type="project" value="RHEA"/>
</dbReference>
<dbReference type="GO" id="GO:0046872">
    <property type="term" value="F:metal ion binding"/>
    <property type="evidence" value="ECO:0007669"/>
    <property type="project" value="UniProtKB-KW"/>
</dbReference>
<dbReference type="GO" id="GO:0006650">
    <property type="term" value="P:glycerophospholipid metabolic process"/>
    <property type="evidence" value="ECO:0007669"/>
    <property type="project" value="UniProtKB-UniRule"/>
</dbReference>
<dbReference type="GO" id="GO:0008654">
    <property type="term" value="P:phospholipid biosynthetic process"/>
    <property type="evidence" value="ECO:0007669"/>
    <property type="project" value="UniProtKB-KW"/>
</dbReference>
<dbReference type="CDD" id="cd08173">
    <property type="entry name" value="Gro1PDH"/>
    <property type="match status" value="1"/>
</dbReference>
<dbReference type="Gene3D" id="3.40.50.1970">
    <property type="match status" value="1"/>
</dbReference>
<dbReference type="Gene3D" id="1.20.1090.10">
    <property type="entry name" value="Dehydroquinate synthase-like - alpha domain"/>
    <property type="match status" value="1"/>
</dbReference>
<dbReference type="HAMAP" id="MF_00497_A">
    <property type="entry name" value="G1P_dehydrogenase_A"/>
    <property type="match status" value="1"/>
</dbReference>
<dbReference type="InterPro" id="IPR023002">
    <property type="entry name" value="G1P_dehydrogenase_arc"/>
</dbReference>
<dbReference type="InterPro" id="IPR032837">
    <property type="entry name" value="G1PDH"/>
</dbReference>
<dbReference type="InterPro" id="IPR016205">
    <property type="entry name" value="Glycerol_DH"/>
</dbReference>
<dbReference type="NCBIfam" id="NF002022">
    <property type="entry name" value="PRK00843.1"/>
    <property type="match status" value="1"/>
</dbReference>
<dbReference type="PANTHER" id="PTHR43616">
    <property type="entry name" value="GLYCEROL DEHYDROGENASE"/>
    <property type="match status" value="1"/>
</dbReference>
<dbReference type="PANTHER" id="PTHR43616:SF5">
    <property type="entry name" value="GLYCEROL DEHYDROGENASE 1"/>
    <property type="match status" value="1"/>
</dbReference>
<dbReference type="Pfam" id="PF13685">
    <property type="entry name" value="Fe-ADH_2"/>
    <property type="match status" value="1"/>
</dbReference>
<dbReference type="PIRSF" id="PIRSF000112">
    <property type="entry name" value="Glycerol_dehydrogenase"/>
    <property type="match status" value="1"/>
</dbReference>
<dbReference type="SUPFAM" id="SSF56796">
    <property type="entry name" value="Dehydroquinate synthase-like"/>
    <property type="match status" value="1"/>
</dbReference>